<gene>
    <name type="ORF">SPAC694.04c</name>
</gene>
<accession>Q9P7T6</accession>
<feature type="chain" id="PRO_0000213486" description="MYG1 protein C694.04c">
    <location>
        <begin position="1"/>
        <end position="324"/>
    </location>
</feature>
<reference key="1">
    <citation type="journal article" date="2002" name="Nature">
        <title>The genome sequence of Schizosaccharomyces pombe.</title>
        <authorList>
            <person name="Wood V."/>
            <person name="Gwilliam R."/>
            <person name="Rajandream M.A."/>
            <person name="Lyne M.H."/>
            <person name="Lyne R."/>
            <person name="Stewart A."/>
            <person name="Sgouros J.G."/>
            <person name="Peat N."/>
            <person name="Hayles J."/>
            <person name="Baker S.G."/>
            <person name="Basham D."/>
            <person name="Bowman S."/>
            <person name="Brooks K."/>
            <person name="Brown D."/>
            <person name="Brown S."/>
            <person name="Chillingworth T."/>
            <person name="Churcher C.M."/>
            <person name="Collins M."/>
            <person name="Connor R."/>
            <person name="Cronin A."/>
            <person name="Davis P."/>
            <person name="Feltwell T."/>
            <person name="Fraser A."/>
            <person name="Gentles S."/>
            <person name="Goble A."/>
            <person name="Hamlin N."/>
            <person name="Harris D.E."/>
            <person name="Hidalgo J."/>
            <person name="Hodgson G."/>
            <person name="Holroyd S."/>
            <person name="Hornsby T."/>
            <person name="Howarth S."/>
            <person name="Huckle E.J."/>
            <person name="Hunt S."/>
            <person name="Jagels K."/>
            <person name="James K.D."/>
            <person name="Jones L."/>
            <person name="Jones M."/>
            <person name="Leather S."/>
            <person name="McDonald S."/>
            <person name="McLean J."/>
            <person name="Mooney P."/>
            <person name="Moule S."/>
            <person name="Mungall K.L."/>
            <person name="Murphy L.D."/>
            <person name="Niblett D."/>
            <person name="Odell C."/>
            <person name="Oliver K."/>
            <person name="O'Neil S."/>
            <person name="Pearson D."/>
            <person name="Quail M.A."/>
            <person name="Rabbinowitsch E."/>
            <person name="Rutherford K.M."/>
            <person name="Rutter S."/>
            <person name="Saunders D."/>
            <person name="Seeger K."/>
            <person name="Sharp S."/>
            <person name="Skelton J."/>
            <person name="Simmonds M.N."/>
            <person name="Squares R."/>
            <person name="Squares S."/>
            <person name="Stevens K."/>
            <person name="Taylor K."/>
            <person name="Taylor R.G."/>
            <person name="Tivey A."/>
            <person name="Walsh S.V."/>
            <person name="Warren T."/>
            <person name="Whitehead S."/>
            <person name="Woodward J.R."/>
            <person name="Volckaert G."/>
            <person name="Aert R."/>
            <person name="Robben J."/>
            <person name="Grymonprez B."/>
            <person name="Weltjens I."/>
            <person name="Vanstreels E."/>
            <person name="Rieger M."/>
            <person name="Schaefer M."/>
            <person name="Mueller-Auer S."/>
            <person name="Gabel C."/>
            <person name="Fuchs M."/>
            <person name="Duesterhoeft A."/>
            <person name="Fritzc C."/>
            <person name="Holzer E."/>
            <person name="Moestl D."/>
            <person name="Hilbert H."/>
            <person name="Borzym K."/>
            <person name="Langer I."/>
            <person name="Beck A."/>
            <person name="Lehrach H."/>
            <person name="Reinhardt R."/>
            <person name="Pohl T.M."/>
            <person name="Eger P."/>
            <person name="Zimmermann W."/>
            <person name="Wedler H."/>
            <person name="Wambutt R."/>
            <person name="Purnelle B."/>
            <person name="Goffeau A."/>
            <person name="Cadieu E."/>
            <person name="Dreano S."/>
            <person name="Gloux S."/>
            <person name="Lelaure V."/>
            <person name="Mottier S."/>
            <person name="Galibert F."/>
            <person name="Aves S.J."/>
            <person name="Xiang Z."/>
            <person name="Hunt C."/>
            <person name="Moore K."/>
            <person name="Hurst S.M."/>
            <person name="Lucas M."/>
            <person name="Rochet M."/>
            <person name="Gaillardin C."/>
            <person name="Tallada V.A."/>
            <person name="Garzon A."/>
            <person name="Thode G."/>
            <person name="Daga R.R."/>
            <person name="Cruzado L."/>
            <person name="Jimenez J."/>
            <person name="Sanchez M."/>
            <person name="del Rey F."/>
            <person name="Benito J."/>
            <person name="Dominguez A."/>
            <person name="Revuelta J.L."/>
            <person name="Moreno S."/>
            <person name="Armstrong J."/>
            <person name="Forsburg S.L."/>
            <person name="Cerutti L."/>
            <person name="Lowe T."/>
            <person name="McCombie W.R."/>
            <person name="Paulsen I."/>
            <person name="Potashkin J."/>
            <person name="Shpakovski G.V."/>
            <person name="Ussery D."/>
            <person name="Barrell B.G."/>
            <person name="Nurse P."/>
        </authorList>
    </citation>
    <scope>NUCLEOTIDE SEQUENCE [LARGE SCALE GENOMIC DNA]</scope>
    <source>
        <strain>972 / ATCC 24843</strain>
    </source>
</reference>
<keyword id="KW-1185">Reference proteome</keyword>
<protein>
    <recommendedName>
        <fullName>MYG1 protein C694.04c</fullName>
    </recommendedName>
</protein>
<dbReference type="EMBL" id="CU329670">
    <property type="protein sequence ID" value="CAB71842.1"/>
    <property type="molecule type" value="Genomic_DNA"/>
</dbReference>
<dbReference type="PIR" id="T50249">
    <property type="entry name" value="T50249"/>
</dbReference>
<dbReference type="RefSeq" id="NP_594484.1">
    <property type="nucleotide sequence ID" value="NM_001019913.2"/>
</dbReference>
<dbReference type="BioGRID" id="279732">
    <property type="interactions" value="34"/>
</dbReference>
<dbReference type="FunCoup" id="Q9P7T6">
    <property type="interactions" value="1182"/>
</dbReference>
<dbReference type="STRING" id="284812.Q9P7T6"/>
<dbReference type="PaxDb" id="4896-SPAC694.04c.1"/>
<dbReference type="EnsemblFungi" id="SPAC694.04c.1">
    <property type="protein sequence ID" value="SPAC694.04c.1:pep"/>
    <property type="gene ID" value="SPAC694.04c"/>
</dbReference>
<dbReference type="KEGG" id="spo:2543308"/>
<dbReference type="PomBase" id="SPAC694.04c"/>
<dbReference type="VEuPathDB" id="FungiDB:SPAC694.04c"/>
<dbReference type="eggNOG" id="KOG2948">
    <property type="taxonomic scope" value="Eukaryota"/>
</dbReference>
<dbReference type="HOGENOM" id="CLU_051576_0_0_1"/>
<dbReference type="InParanoid" id="Q9P7T6"/>
<dbReference type="OMA" id="FHCDEVV"/>
<dbReference type="PhylomeDB" id="Q9P7T6"/>
<dbReference type="PRO" id="PR:Q9P7T6"/>
<dbReference type="Proteomes" id="UP000002485">
    <property type="component" value="Chromosome I"/>
</dbReference>
<dbReference type="GO" id="GO:0005737">
    <property type="term" value="C:cytoplasm"/>
    <property type="evidence" value="ECO:0000318"/>
    <property type="project" value="GO_Central"/>
</dbReference>
<dbReference type="GO" id="GO:0005829">
    <property type="term" value="C:cytosol"/>
    <property type="evidence" value="ECO:0007005"/>
    <property type="project" value="PomBase"/>
</dbReference>
<dbReference type="GO" id="GO:0005739">
    <property type="term" value="C:mitochondrion"/>
    <property type="evidence" value="ECO:0000250"/>
    <property type="project" value="PomBase"/>
</dbReference>
<dbReference type="GO" id="GO:0005634">
    <property type="term" value="C:nucleus"/>
    <property type="evidence" value="ECO:0007005"/>
    <property type="project" value="PomBase"/>
</dbReference>
<dbReference type="GO" id="GO:0016787">
    <property type="term" value="F:hydrolase activity"/>
    <property type="evidence" value="ECO:0000255"/>
    <property type="project" value="PomBase"/>
</dbReference>
<dbReference type="InterPro" id="IPR003226">
    <property type="entry name" value="MYG1_exonuclease"/>
</dbReference>
<dbReference type="PANTHER" id="PTHR11215">
    <property type="entry name" value="METAL DEPENDENT HYDROLASE - RELATED"/>
    <property type="match status" value="1"/>
</dbReference>
<dbReference type="PANTHER" id="PTHR11215:SF1">
    <property type="entry name" value="MYG1 EXONUCLEASE"/>
    <property type="match status" value="1"/>
</dbReference>
<dbReference type="Pfam" id="PF03690">
    <property type="entry name" value="MYG1_exonuc"/>
    <property type="match status" value="1"/>
</dbReference>
<organism>
    <name type="scientific">Schizosaccharomyces pombe (strain 972 / ATCC 24843)</name>
    <name type="common">Fission yeast</name>
    <dbReference type="NCBI Taxonomy" id="284812"/>
    <lineage>
        <taxon>Eukaryota</taxon>
        <taxon>Fungi</taxon>
        <taxon>Dikarya</taxon>
        <taxon>Ascomycota</taxon>
        <taxon>Taphrinomycotina</taxon>
        <taxon>Schizosaccharomycetes</taxon>
        <taxon>Schizosaccharomycetales</taxon>
        <taxon>Schizosaccharomycetaceae</taxon>
        <taxon>Schizosaccharomyces</taxon>
    </lineage>
</organism>
<proteinExistence type="inferred from homology"/>
<sequence>MNNLVKIATHSGTFHADEALAVYMLRRLDRFSGAQIVRSRDPQVLDSCDIIVDVGGKYDGIKYFDHHQREFNDTFSPKYSTRLSSAGLIYKHFGREVIHAVLPQLKINEQDLETLYEKVYQSFVEGLDANDNGISAYPAGLKPSFKAAMSLPEMVSSFLPAWNSEKQDDQTYLECFQKASDLMGTWFVRSVEHYALSWLPAKTLAREAILKAKDSPILIVDQFFPWKGHLFDIEKELGIENQFKYAIYSDGKAWRVQAVSIDPTSFTCRLPLPEPWRGIRDEKLSELTGIPGCIFVHASGFIGGNQTFEGALEMARKALDFPQN</sequence>
<evidence type="ECO:0000305" key="1"/>
<name>YIW4_SCHPO</name>
<comment type="similarity">
    <text evidence="1">Belongs to the MYG1 family.</text>
</comment>